<proteinExistence type="evidence at protein level"/>
<comment type="function">
    <text evidence="4 6 7 8 9 10 12">Probable lipid transfer protein (LTP). Seems to control the flowering process and lignin synthesis. Together with DIR1, required for glycerol-3-phosphate- (G3P) and azelaic acid- (AA) induced systemic acquired resistance (SAR). Component of plant systemic immunity involved in priming defenses in a AA-dependent manner, by modulating production and/or translocation of a mobile signal(s) during SAR. Confers resistance to Botrytis cinerea and Pseudomonas syringae pv. tomato DC3000 and PmaDG3. May be involved in induced systemic resistance (ISR) mediated by non-pathogenic bacteria (e.g. P. fluorescens GM30). Prevents electrolyte leakage during freezing damage.</text>
</comment>
<comment type="subunit">
    <text evidence="10 11">Self-interacts and binds to DIR1 (PubMed:23602565). Interacts with PDLP1 (PubMed:27078071).</text>
</comment>
<comment type="subcellular location">
    <subcellularLocation>
        <location evidence="1">Secreted</location>
        <location evidence="1">Cell wall</location>
    </subcellularLocation>
    <subcellularLocation>
        <location evidence="10 11">Endoplasmic reticulum</location>
    </subcellularLocation>
    <subcellularLocation>
        <location evidence="10">Cell junction</location>
        <location evidence="10">Plasmodesma</location>
    </subcellularLocation>
    <subcellularLocation>
        <location evidence="11">Plastid</location>
        <location evidence="11">Chloroplast</location>
    </subcellularLocation>
    <text evidence="11">Chloroplast location is observed in the absence of PLDP1 or PDLP5.</text>
</comment>
<comment type="induction">
    <text evidence="5 6 7 9 10">Transient accumulation in response to a brief exposures to cold. Induced by glycerol-3-phosphate (G3P) and azelaic acid (AA) during systemic acquired resistance (SAR) and Pseudomonas fluorescens GM30 strain during induced systemic resistance (ISR).</text>
</comment>
<comment type="disruption phenotype">
    <text evidence="6 7 8 10 12">Reduced cutin accumulation due to lower cutin biosynthesis. Early flowering in long-day conditions. Compromised pathogen-induced (e.g. Pseudomonas syringae pv. tomato DC3000 and PmaDG3) glycerol-3-phosphate- (G3P) and azelaic acid-(AA) dependent systemic acquired resistance (SAR). Increased tendencies in cellular damage after freezing treatment.</text>
</comment>
<comment type="similarity">
    <text evidence="13">Belongs to the plant LTP family. PEARLI1 subfamily.</text>
</comment>
<organism>
    <name type="scientific">Arabidopsis thaliana</name>
    <name type="common">Mouse-ear cress</name>
    <dbReference type="NCBI Taxonomy" id="3702"/>
    <lineage>
        <taxon>Eukaryota</taxon>
        <taxon>Viridiplantae</taxon>
        <taxon>Streptophyta</taxon>
        <taxon>Embryophyta</taxon>
        <taxon>Tracheophyta</taxon>
        <taxon>Spermatophyta</taxon>
        <taxon>Magnoliopsida</taxon>
        <taxon>eudicotyledons</taxon>
        <taxon>Gunneridae</taxon>
        <taxon>Pentapetalae</taxon>
        <taxon>rosids</taxon>
        <taxon>malvids</taxon>
        <taxon>Brassicales</taxon>
        <taxon>Brassicaceae</taxon>
        <taxon>Camelineae</taxon>
        <taxon>Arabidopsis</taxon>
    </lineage>
</organism>
<keyword id="KW-0965">Cell junction</keyword>
<keyword id="KW-0134">Cell wall</keyword>
<keyword id="KW-0150">Chloroplast</keyword>
<keyword id="KW-0256">Endoplasmic reticulum</keyword>
<keyword id="KW-0381">Hypersensitive response</keyword>
<keyword id="KW-0611">Plant defense</keyword>
<keyword id="KW-0934">Plastid</keyword>
<keyword id="KW-1185">Reference proteome</keyword>
<keyword id="KW-0677">Repeat</keyword>
<keyword id="KW-0964">Secreted</keyword>
<keyword id="KW-0732">Signal</keyword>
<gene>
    <name type="primary">AZI1</name>
    <name type="ordered locus">At4g12470</name>
    <name type="ORF">T1P17.60</name>
</gene>
<accession>Q9SU35</accession>
<evidence type="ECO:0000250" key="1"/>
<evidence type="ECO:0000255" key="2"/>
<evidence type="ECO:0000256" key="3">
    <source>
        <dbReference type="SAM" id="MobiDB-lite"/>
    </source>
</evidence>
<evidence type="ECO:0000269" key="4">
    <source>
    </source>
</evidence>
<evidence type="ECO:0000269" key="5">
    <source>
    </source>
</evidence>
<evidence type="ECO:0000269" key="6">
    <source>
    </source>
</evidence>
<evidence type="ECO:0000269" key="7">
    <source>
    </source>
</evidence>
<evidence type="ECO:0000269" key="8">
    <source>
    </source>
</evidence>
<evidence type="ECO:0000269" key="9">
    <source>
    </source>
</evidence>
<evidence type="ECO:0000269" key="10">
    <source>
    </source>
</evidence>
<evidence type="ECO:0000269" key="11">
    <source>
    </source>
</evidence>
<evidence type="ECO:0000269" key="12">
    <source>
    </source>
</evidence>
<evidence type="ECO:0000305" key="13"/>
<sequence length="161" mass="16766">MASKNSASLALFFALNILFFTLTVATNCNCKPSPKPKPVPSPKPKPVQCPPPPRPSVPSPNPRPVTPPRTPGSSGNSCPIDALKLGVCANVLSSLLNIQLGQPSSQQCCSLIQGLVDVDAAICLCTALRANVLGINLNVPISLSVLLNVCNRKLPSGFQCA</sequence>
<dbReference type="EMBL" id="AL049730">
    <property type="protein sequence ID" value="CAB41717.1"/>
    <property type="molecule type" value="Genomic_DNA"/>
</dbReference>
<dbReference type="EMBL" id="AL161534">
    <property type="protein sequence ID" value="CAB78290.1"/>
    <property type="molecule type" value="Genomic_DNA"/>
</dbReference>
<dbReference type="EMBL" id="CP002687">
    <property type="protein sequence ID" value="AEE83137.1"/>
    <property type="molecule type" value="Genomic_DNA"/>
</dbReference>
<dbReference type="EMBL" id="AY093032">
    <property type="protein sequence ID" value="AAM13031.1"/>
    <property type="molecule type" value="mRNA"/>
</dbReference>
<dbReference type="EMBL" id="BT000404">
    <property type="protein sequence ID" value="AAN15723.1"/>
    <property type="molecule type" value="mRNA"/>
</dbReference>
<dbReference type="PIR" id="T07639">
    <property type="entry name" value="T07639"/>
</dbReference>
<dbReference type="RefSeq" id="NP_192984.1">
    <property type="nucleotide sequence ID" value="NM_117317.4"/>
</dbReference>
<dbReference type="SMR" id="Q9SU35"/>
<dbReference type="BioGRID" id="12157">
    <property type="interactions" value="2"/>
</dbReference>
<dbReference type="STRING" id="3702.Q9SU35"/>
<dbReference type="GlyGen" id="Q9SU35">
    <property type="glycosylation" value="1 site"/>
</dbReference>
<dbReference type="iPTMnet" id="Q9SU35"/>
<dbReference type="PaxDb" id="3702-AT4G12470.1"/>
<dbReference type="ProteomicsDB" id="220696"/>
<dbReference type="EnsemblPlants" id="AT4G12470.1">
    <property type="protein sequence ID" value="AT4G12470.1"/>
    <property type="gene ID" value="AT4G12470"/>
</dbReference>
<dbReference type="GeneID" id="826859"/>
<dbReference type="Gramene" id="AT4G12470.1">
    <property type="protein sequence ID" value="AT4G12470.1"/>
    <property type="gene ID" value="AT4G12470"/>
</dbReference>
<dbReference type="KEGG" id="ath:AT4G12470"/>
<dbReference type="Araport" id="AT4G12470"/>
<dbReference type="TAIR" id="AT4G12470">
    <property type="gene designation" value="AZI1"/>
</dbReference>
<dbReference type="eggNOG" id="ENOG502S36E">
    <property type="taxonomic scope" value="Eukaryota"/>
</dbReference>
<dbReference type="HOGENOM" id="CLU_055715_3_2_1"/>
<dbReference type="InParanoid" id="Q9SU35"/>
<dbReference type="OMA" id="VATNCNC"/>
<dbReference type="OrthoDB" id="696558at2759"/>
<dbReference type="PhylomeDB" id="Q9SU35"/>
<dbReference type="PRO" id="PR:Q9SU35"/>
<dbReference type="Proteomes" id="UP000006548">
    <property type="component" value="Chromosome 4"/>
</dbReference>
<dbReference type="ExpressionAtlas" id="Q9SU35">
    <property type="expression patterns" value="baseline and differential"/>
</dbReference>
<dbReference type="GO" id="GO:0048046">
    <property type="term" value="C:apoplast"/>
    <property type="evidence" value="ECO:0000314"/>
    <property type="project" value="TAIR"/>
</dbReference>
<dbReference type="GO" id="GO:0009507">
    <property type="term" value="C:chloroplast"/>
    <property type="evidence" value="ECO:0000314"/>
    <property type="project" value="TAIR"/>
</dbReference>
<dbReference type="GO" id="GO:0009707">
    <property type="term" value="C:chloroplast outer membrane"/>
    <property type="evidence" value="ECO:0000314"/>
    <property type="project" value="TAIR"/>
</dbReference>
<dbReference type="GO" id="GO:0005783">
    <property type="term" value="C:endoplasmic reticulum"/>
    <property type="evidence" value="ECO:0000314"/>
    <property type="project" value="UniProtKB"/>
</dbReference>
<dbReference type="GO" id="GO:0009506">
    <property type="term" value="C:plasmodesma"/>
    <property type="evidence" value="ECO:0000314"/>
    <property type="project" value="UniProtKB"/>
</dbReference>
<dbReference type="GO" id="GO:0070417">
    <property type="term" value="P:cellular response to cold"/>
    <property type="evidence" value="ECO:0000315"/>
    <property type="project" value="UniProtKB"/>
</dbReference>
<dbReference type="GO" id="GO:0009631">
    <property type="term" value="P:cold acclimation"/>
    <property type="evidence" value="ECO:0000315"/>
    <property type="project" value="UniProtKB"/>
</dbReference>
<dbReference type="GO" id="GO:0050832">
    <property type="term" value="P:defense response to fungus"/>
    <property type="evidence" value="ECO:0000315"/>
    <property type="project" value="TAIR"/>
</dbReference>
<dbReference type="GO" id="GO:0009682">
    <property type="term" value="P:induced systemic resistance"/>
    <property type="evidence" value="ECO:0000315"/>
    <property type="project" value="TAIR"/>
</dbReference>
<dbReference type="GO" id="GO:0009626">
    <property type="term" value="P:plant-type hypersensitive response"/>
    <property type="evidence" value="ECO:0007669"/>
    <property type="project" value="UniProtKB-KW"/>
</dbReference>
<dbReference type="GO" id="GO:0009627">
    <property type="term" value="P:systemic acquired resistance"/>
    <property type="evidence" value="ECO:0000315"/>
    <property type="project" value="TAIR"/>
</dbReference>
<dbReference type="CDD" id="cd01958">
    <property type="entry name" value="HPS_like"/>
    <property type="match status" value="1"/>
</dbReference>
<dbReference type="FunFam" id="1.10.110.10:FF:000003">
    <property type="entry name" value="pEARLI1-like lipid transfer protein 1"/>
    <property type="match status" value="1"/>
</dbReference>
<dbReference type="Gene3D" id="1.10.110.10">
    <property type="entry name" value="Plant lipid-transfer and hydrophobic proteins"/>
    <property type="match status" value="1"/>
</dbReference>
<dbReference type="InterPro" id="IPR036312">
    <property type="entry name" value="Bifun_inhib/LTP/seed_sf"/>
</dbReference>
<dbReference type="InterPro" id="IPR016140">
    <property type="entry name" value="Bifunc_inhib/LTP/seed_store"/>
</dbReference>
<dbReference type="InterPro" id="IPR027923">
    <property type="entry name" value="Hydrophob_seed_dom"/>
</dbReference>
<dbReference type="InterPro" id="IPR051636">
    <property type="entry name" value="Plant_LTP/defense-related"/>
</dbReference>
<dbReference type="PANTHER" id="PTHR31731">
    <property type="match status" value="1"/>
</dbReference>
<dbReference type="Pfam" id="PF14547">
    <property type="entry name" value="Hydrophob_seed"/>
    <property type="match status" value="1"/>
</dbReference>
<dbReference type="SMART" id="SM00499">
    <property type="entry name" value="AAI"/>
    <property type="match status" value="1"/>
</dbReference>
<dbReference type="SUPFAM" id="SSF47699">
    <property type="entry name" value="Bifunctional inhibitor/lipid-transfer protein/seed storage 2S albumin"/>
    <property type="match status" value="1"/>
</dbReference>
<protein>
    <recommendedName>
        <fullName>pEARLI1-like lipid transfer protein 1</fullName>
    </recommendedName>
    <alternativeName>
        <fullName>Protein AZELAIC ACID INDUCED 1</fullName>
    </alternativeName>
</protein>
<feature type="signal peptide" evidence="2">
    <location>
        <begin position="1"/>
        <end position="25"/>
    </location>
</feature>
<feature type="chain" id="PRO_0000425605" description="pEARLI1-like lipid transfer protein 1">
    <location>
        <begin position="26"/>
        <end position="161"/>
    </location>
</feature>
<feature type="repeat" description="A-1" evidence="1">
    <location>
        <begin position="32"/>
        <end position="39"/>
    </location>
</feature>
<feature type="repeat" description="A-2" evidence="1">
    <location>
        <begin position="40"/>
        <end position="47"/>
    </location>
</feature>
<feature type="region of interest" description="Disordered" evidence="3">
    <location>
        <begin position="32"/>
        <end position="76"/>
    </location>
</feature>
<feature type="region of interest" description="2 X 8 AA tandem repeats A of P-S-P-K-P-K-P-V" evidence="1">
    <location>
        <begin position="34"/>
        <end position="49"/>
    </location>
</feature>
<feature type="compositionally biased region" description="Pro residues" evidence="3">
    <location>
        <begin position="33"/>
        <end position="70"/>
    </location>
</feature>
<name>ERLL1_ARATH</name>
<reference key="1">
    <citation type="journal article" date="1999" name="Nature">
        <title>Sequence and analysis of chromosome 4 of the plant Arabidopsis thaliana.</title>
        <authorList>
            <person name="Mayer K.F.X."/>
            <person name="Schueller C."/>
            <person name="Wambutt R."/>
            <person name="Murphy G."/>
            <person name="Volckaert G."/>
            <person name="Pohl T."/>
            <person name="Duesterhoeft A."/>
            <person name="Stiekema W."/>
            <person name="Entian K.-D."/>
            <person name="Terryn N."/>
            <person name="Harris B."/>
            <person name="Ansorge W."/>
            <person name="Brandt P."/>
            <person name="Grivell L.A."/>
            <person name="Rieger M."/>
            <person name="Weichselgartner M."/>
            <person name="de Simone V."/>
            <person name="Obermaier B."/>
            <person name="Mache R."/>
            <person name="Mueller M."/>
            <person name="Kreis M."/>
            <person name="Delseny M."/>
            <person name="Puigdomenech P."/>
            <person name="Watson M."/>
            <person name="Schmidtheini T."/>
            <person name="Reichert B."/>
            <person name="Portetelle D."/>
            <person name="Perez-Alonso M."/>
            <person name="Boutry M."/>
            <person name="Bancroft I."/>
            <person name="Vos P."/>
            <person name="Hoheisel J."/>
            <person name="Zimmermann W."/>
            <person name="Wedler H."/>
            <person name="Ridley P."/>
            <person name="Langham S.-A."/>
            <person name="McCullagh B."/>
            <person name="Bilham L."/>
            <person name="Robben J."/>
            <person name="van der Schueren J."/>
            <person name="Grymonprez B."/>
            <person name="Chuang Y.-J."/>
            <person name="Vandenbussche F."/>
            <person name="Braeken M."/>
            <person name="Weltjens I."/>
            <person name="Voet M."/>
            <person name="Bastiaens I."/>
            <person name="Aert R."/>
            <person name="Defoor E."/>
            <person name="Weitzenegger T."/>
            <person name="Bothe G."/>
            <person name="Ramsperger U."/>
            <person name="Hilbert H."/>
            <person name="Braun M."/>
            <person name="Holzer E."/>
            <person name="Brandt A."/>
            <person name="Peters S."/>
            <person name="van Staveren M."/>
            <person name="Dirkse W."/>
            <person name="Mooijman P."/>
            <person name="Klein Lankhorst R."/>
            <person name="Rose M."/>
            <person name="Hauf J."/>
            <person name="Koetter P."/>
            <person name="Berneiser S."/>
            <person name="Hempel S."/>
            <person name="Feldpausch M."/>
            <person name="Lamberth S."/>
            <person name="Van den Daele H."/>
            <person name="De Keyser A."/>
            <person name="Buysshaert C."/>
            <person name="Gielen J."/>
            <person name="Villarroel R."/>
            <person name="De Clercq R."/>
            <person name="van Montagu M."/>
            <person name="Rogers J."/>
            <person name="Cronin A."/>
            <person name="Quail M.A."/>
            <person name="Bray-Allen S."/>
            <person name="Clark L."/>
            <person name="Doggett J."/>
            <person name="Hall S."/>
            <person name="Kay M."/>
            <person name="Lennard N."/>
            <person name="McLay K."/>
            <person name="Mayes R."/>
            <person name="Pettett A."/>
            <person name="Rajandream M.A."/>
            <person name="Lyne M."/>
            <person name="Benes V."/>
            <person name="Rechmann S."/>
            <person name="Borkova D."/>
            <person name="Bloecker H."/>
            <person name="Scharfe M."/>
            <person name="Grimm M."/>
            <person name="Loehnert T.-H."/>
            <person name="Dose S."/>
            <person name="de Haan M."/>
            <person name="Maarse A.C."/>
            <person name="Schaefer M."/>
            <person name="Mueller-Auer S."/>
            <person name="Gabel C."/>
            <person name="Fuchs M."/>
            <person name="Fartmann B."/>
            <person name="Granderath K."/>
            <person name="Dauner D."/>
            <person name="Herzl A."/>
            <person name="Neumann S."/>
            <person name="Argiriou A."/>
            <person name="Vitale D."/>
            <person name="Liguori R."/>
            <person name="Piravandi E."/>
            <person name="Massenet O."/>
            <person name="Quigley F."/>
            <person name="Clabauld G."/>
            <person name="Muendlein A."/>
            <person name="Felber R."/>
            <person name="Schnabl S."/>
            <person name="Hiller R."/>
            <person name="Schmidt W."/>
            <person name="Lecharny A."/>
            <person name="Aubourg S."/>
            <person name="Chefdor F."/>
            <person name="Cooke R."/>
            <person name="Berger C."/>
            <person name="Monfort A."/>
            <person name="Casacuberta E."/>
            <person name="Gibbons T."/>
            <person name="Weber N."/>
            <person name="Vandenbol M."/>
            <person name="Bargues M."/>
            <person name="Terol J."/>
            <person name="Torres A."/>
            <person name="Perez-Perez A."/>
            <person name="Purnelle B."/>
            <person name="Bent E."/>
            <person name="Johnson S."/>
            <person name="Tacon D."/>
            <person name="Jesse T."/>
            <person name="Heijnen L."/>
            <person name="Schwarz S."/>
            <person name="Scholler P."/>
            <person name="Heber S."/>
            <person name="Francs P."/>
            <person name="Bielke C."/>
            <person name="Frishman D."/>
            <person name="Haase D."/>
            <person name="Lemcke K."/>
            <person name="Mewes H.-W."/>
            <person name="Stocker S."/>
            <person name="Zaccaria P."/>
            <person name="Bevan M."/>
            <person name="Wilson R.K."/>
            <person name="de la Bastide M."/>
            <person name="Habermann K."/>
            <person name="Parnell L."/>
            <person name="Dedhia N."/>
            <person name="Gnoj L."/>
            <person name="Schutz K."/>
            <person name="Huang E."/>
            <person name="Spiegel L."/>
            <person name="Sekhon M."/>
            <person name="Murray J."/>
            <person name="Sheet P."/>
            <person name="Cordes M."/>
            <person name="Abu-Threideh J."/>
            <person name="Stoneking T."/>
            <person name="Kalicki J."/>
            <person name="Graves T."/>
            <person name="Harmon G."/>
            <person name="Edwards J."/>
            <person name="Latreille P."/>
            <person name="Courtney L."/>
            <person name="Cloud J."/>
            <person name="Abbott A."/>
            <person name="Scott K."/>
            <person name="Johnson D."/>
            <person name="Minx P."/>
            <person name="Bentley D."/>
            <person name="Fulton B."/>
            <person name="Miller N."/>
            <person name="Greco T."/>
            <person name="Kemp K."/>
            <person name="Kramer J."/>
            <person name="Fulton L."/>
            <person name="Mardis E."/>
            <person name="Dante M."/>
            <person name="Pepin K."/>
            <person name="Hillier L.W."/>
            <person name="Nelson J."/>
            <person name="Spieth J."/>
            <person name="Ryan E."/>
            <person name="Andrews S."/>
            <person name="Geisel C."/>
            <person name="Layman D."/>
            <person name="Du H."/>
            <person name="Ali J."/>
            <person name="Berghoff A."/>
            <person name="Jones K."/>
            <person name="Drone K."/>
            <person name="Cotton M."/>
            <person name="Joshu C."/>
            <person name="Antonoiu B."/>
            <person name="Zidanic M."/>
            <person name="Strong C."/>
            <person name="Sun H."/>
            <person name="Lamar B."/>
            <person name="Yordan C."/>
            <person name="Ma P."/>
            <person name="Zhong J."/>
            <person name="Preston R."/>
            <person name="Vil D."/>
            <person name="Shekher M."/>
            <person name="Matero A."/>
            <person name="Shah R."/>
            <person name="Swaby I.K."/>
            <person name="O'Shaughnessy A."/>
            <person name="Rodriguez M."/>
            <person name="Hoffman J."/>
            <person name="Till S."/>
            <person name="Granat S."/>
            <person name="Shohdy N."/>
            <person name="Hasegawa A."/>
            <person name="Hameed A."/>
            <person name="Lodhi M."/>
            <person name="Johnson A."/>
            <person name="Chen E."/>
            <person name="Marra M.A."/>
            <person name="Martienssen R."/>
            <person name="McCombie W.R."/>
        </authorList>
    </citation>
    <scope>NUCLEOTIDE SEQUENCE [LARGE SCALE GENOMIC DNA]</scope>
    <source>
        <strain>cv. Columbia</strain>
    </source>
</reference>
<reference key="2">
    <citation type="journal article" date="2017" name="Plant J.">
        <title>Araport11: a complete reannotation of the Arabidopsis thaliana reference genome.</title>
        <authorList>
            <person name="Cheng C.Y."/>
            <person name="Krishnakumar V."/>
            <person name="Chan A.P."/>
            <person name="Thibaud-Nissen F."/>
            <person name="Schobel S."/>
            <person name="Town C.D."/>
        </authorList>
    </citation>
    <scope>GENOME REANNOTATION</scope>
    <source>
        <strain>cv. Columbia</strain>
    </source>
</reference>
<reference key="3">
    <citation type="journal article" date="2003" name="Science">
        <title>Empirical analysis of transcriptional activity in the Arabidopsis genome.</title>
        <authorList>
            <person name="Yamada K."/>
            <person name="Lim J."/>
            <person name="Dale J.M."/>
            <person name="Chen H."/>
            <person name="Shinn P."/>
            <person name="Palm C.J."/>
            <person name="Southwick A.M."/>
            <person name="Wu H.C."/>
            <person name="Kim C.J."/>
            <person name="Nguyen M."/>
            <person name="Pham P.K."/>
            <person name="Cheuk R.F."/>
            <person name="Karlin-Newmann G."/>
            <person name="Liu S.X."/>
            <person name="Lam B."/>
            <person name="Sakano H."/>
            <person name="Wu T."/>
            <person name="Yu G."/>
            <person name="Miranda M."/>
            <person name="Quach H.L."/>
            <person name="Tripp M."/>
            <person name="Chang C.H."/>
            <person name="Lee J.M."/>
            <person name="Toriumi M.J."/>
            <person name="Chan M.M."/>
            <person name="Tang C.C."/>
            <person name="Onodera C.S."/>
            <person name="Deng J.M."/>
            <person name="Akiyama K."/>
            <person name="Ansari Y."/>
            <person name="Arakawa T."/>
            <person name="Banh J."/>
            <person name="Banno F."/>
            <person name="Bowser L."/>
            <person name="Brooks S.Y."/>
            <person name="Carninci P."/>
            <person name="Chao Q."/>
            <person name="Choy N."/>
            <person name="Enju A."/>
            <person name="Goldsmith A.D."/>
            <person name="Gurjal M."/>
            <person name="Hansen N.F."/>
            <person name="Hayashizaki Y."/>
            <person name="Johnson-Hopson C."/>
            <person name="Hsuan V.W."/>
            <person name="Iida K."/>
            <person name="Karnes M."/>
            <person name="Khan S."/>
            <person name="Koesema E."/>
            <person name="Ishida J."/>
            <person name="Jiang P.X."/>
            <person name="Jones T."/>
            <person name="Kawai J."/>
            <person name="Kamiya A."/>
            <person name="Meyers C."/>
            <person name="Nakajima M."/>
            <person name="Narusaka M."/>
            <person name="Seki M."/>
            <person name="Sakurai T."/>
            <person name="Satou M."/>
            <person name="Tamse R."/>
            <person name="Vaysberg M."/>
            <person name="Wallender E.K."/>
            <person name="Wong C."/>
            <person name="Yamamura Y."/>
            <person name="Yuan S."/>
            <person name="Shinozaki K."/>
            <person name="Davis R.W."/>
            <person name="Theologis A."/>
            <person name="Ecker J.R."/>
        </authorList>
    </citation>
    <scope>NUCLEOTIDE SEQUENCE [LARGE SCALE MRNA]</scope>
    <source>
        <strain>cv. Columbia</strain>
    </source>
</reference>
<reference key="4">
    <citation type="journal article" date="2007" name="Plant J.">
        <title>Cuticular defects lead to full immunity to a major plant pathogen.</title>
        <authorList>
            <person name="Chassot C."/>
            <person name="Nawrath C."/>
            <person name="Metraux J.-P."/>
        </authorList>
    </citation>
    <scope>FUNCTION</scope>
</reference>
<reference key="5">
    <citation type="journal article" date="2007" name="Planta">
        <title>Cold responsive EARLI1 type HyPRPs improve freezing survival of yeast cells and form higher order complexes in plants.</title>
        <authorList>
            <person name="Zhang Y."/>
            <person name="Schlappi M."/>
        </authorList>
    </citation>
    <scope>INDUCTION BY COLD</scope>
    <scope>GENE FAMILY</scope>
    <source>
        <strain>cv. Columbia</strain>
    </source>
</reference>
<reference key="6">
    <citation type="journal article" date="2009" name="Science">
        <title>Priming in systemic plant immunity.</title>
        <authorList>
            <person name="Jung H.W."/>
            <person name="Tschaplinski T.J."/>
            <person name="Wang L."/>
            <person name="Glazebrook J."/>
            <person name="Greenberg J.T."/>
        </authorList>
    </citation>
    <scope>FUNCTION</scope>
    <scope>DISRUPTION PHENOTYPE</scope>
    <scope>INDUCTION BY AZELAIC ACID</scope>
</reference>
<reference key="7">
    <citation type="journal article" date="2011" name="J. Plant Physiol.">
        <title>Cold-inducible expression of AZI1 and its function in improvement of freezing tolerance of Arabidopsis thaliana and Saccharomyces cerevisiae.</title>
        <authorList>
            <person name="Xu Z.Y."/>
            <person name="Zhang X."/>
            <person name="Schlappi M."/>
            <person name="Xu Z.Q."/>
        </authorList>
    </citation>
    <scope>FUNCTION</scope>
    <scope>DISRUPTION PHENOTYPE</scope>
    <scope>INDUCTION BY COLD</scope>
    <source>
        <strain>cv. Columbia</strain>
        <strain>cv. Wassilewskija</strain>
    </source>
</reference>
<reference key="8">
    <citation type="journal article" date="2011" name="Plant Biol.">
        <title>Influence of EARLI1-like genes on flowering time and lignin synthesis of Arabidopsis thaliana.</title>
        <authorList>
            <person name="Shi Y."/>
            <person name="Zhang X."/>
            <person name="Xu Z.Y."/>
            <person name="Li L."/>
            <person name="Zhang C."/>
            <person name="Schlappi M."/>
            <person name="Xu Z.Q."/>
        </authorList>
    </citation>
    <scope>FUNCTION</scope>
    <scope>DISRUPTION PHENOTYPE</scope>
    <scope>GENE FAMILY</scope>
    <source>
        <strain>cv. Columbia</strain>
    </source>
</reference>
<reference key="9">
    <citation type="journal article" date="2012" name="Mol. Plant Microbe Interact.">
        <title>Pseudomonas fluorescens induces strain-dependent and strain-independent host plant responses in defense networks, primary metabolism, photosynthesis, and fitness.</title>
        <authorList>
            <person name="Weston D.J."/>
            <person name="Pelletier D.A."/>
            <person name="Morrell-Falvey J.L."/>
            <person name="Tschaplinski T.J."/>
            <person name="Jawdy S.S."/>
            <person name="Lu T.Y."/>
            <person name="Allen S.M."/>
            <person name="Melton S.J."/>
            <person name="Martin M.Z."/>
            <person name="Schadt C.W."/>
            <person name="Karve A.A."/>
            <person name="Chen J.G."/>
            <person name="Yang X."/>
            <person name="Doktycz M.J."/>
            <person name="Tuskan G.A."/>
        </authorList>
    </citation>
    <scope>FUNCTION</scope>
    <scope>INDUCTION BY PSEUDOMONAS FLUORESCENS</scope>
</reference>
<reference key="10">
    <citation type="journal article" date="2013" name="Cell Rep.">
        <title>A feedback regulatory loop between G3P and lipid transfer proteins DIR1 and AZI1 mediates azelaic-acid-induced systemic immunity.</title>
        <authorList>
            <person name="Yu K."/>
            <person name="Soares J.M."/>
            <person name="Mandal M.K."/>
            <person name="Wang C."/>
            <person name="Chanda B."/>
            <person name="Gifford A.N."/>
            <person name="Fowler J.S."/>
            <person name="Navarre D."/>
            <person name="Kachroo A."/>
            <person name="Kachroo P."/>
        </authorList>
    </citation>
    <scope>FUNCTION</scope>
    <scope>DISRUPTION PHENOTYPE</scope>
    <scope>INDUCTION BY GLYCEROL-3-PHOSPHATE</scope>
    <scope>SUBCELLULAR LOCATION</scope>
    <scope>INTERACTION WITH DIR1</scope>
    <scope>SUBUNIT</scope>
    <source>
        <strain>cv. Columbia</strain>
    </source>
</reference>
<reference key="11">
    <citation type="journal article" date="2016" name="Cell Host Microbe">
        <title>Plasmodesmata localizing proteins regulate transport and signaling during systemic acquired immunity in plants.</title>
        <authorList>
            <person name="Lim G.H."/>
            <person name="Shine M.B."/>
            <person name="de Lorenzo L."/>
            <person name="Yu K."/>
            <person name="Cui W."/>
            <person name="Navarre D."/>
            <person name="Hunt A.G."/>
            <person name="Lee J.Y."/>
            <person name="Kachroo A."/>
            <person name="Kachroo P."/>
        </authorList>
    </citation>
    <scope>INTERACTION WITH PDLP1</scope>
    <scope>SUBCELLULAR LOCATION</scope>
</reference>
<reference key="12">
    <citation type="journal article" date="2016" name="Plant Physiol. Biochem.">
        <title>Metabolomic analysis reveals the relationship between AZI1 and sugar signaling in systemic acquired resistance of Arabidopsis.</title>
        <authorList>
            <person name="Wang X.Y."/>
            <person name="Li D.Z."/>
            <person name="Li Q."/>
            <person name="Ma Y.Q."/>
            <person name="Yao J.W."/>
            <person name="Huang X."/>
            <person name="Xu Z.Q."/>
        </authorList>
    </citation>
    <scope>FUNCTION</scope>
    <scope>DISRUPTION PHENOTYPE</scope>
</reference>